<proteinExistence type="evidence at protein level"/>
<comment type="function">
    <text evidence="2 3">Involved in the methylthioribose (MTR) recycling pathway (PubMed:12022921, PubMed:24837359). Probably catalyzes the conversion of 2-oxoglutaramate to 2-oxoglutarate (PubMed:24837359).</text>
</comment>
<comment type="catalytic activity">
    <reaction evidence="6">
        <text>2-oxoglutaramate + H2O = 2-oxoglutarate + NH4(+)</text>
        <dbReference type="Rhea" id="RHEA:32963"/>
        <dbReference type="ChEBI" id="CHEBI:15377"/>
        <dbReference type="ChEBI" id="CHEBI:16769"/>
        <dbReference type="ChEBI" id="CHEBI:16810"/>
        <dbReference type="ChEBI" id="CHEBI:28938"/>
        <dbReference type="EC" id="3.5.1.111"/>
    </reaction>
</comment>
<comment type="disruption phenotype">
    <text evidence="2 3">Impaired growth on methylthioribose (MTR) as sole sulfur source.</text>
</comment>
<comment type="similarity">
    <text evidence="5">Belongs to the carbon-nitrogen hydrolase superfamily. NIT1/NIT2 family.</text>
</comment>
<accession>O31664</accession>
<feature type="chain" id="PRO_0000360754" description="2-oxoglutaramate amidase">
    <location>
        <begin position="1"/>
        <end position="259"/>
    </location>
</feature>
<feature type="domain" description="CN hydrolase" evidence="1">
    <location>
        <begin position="3"/>
        <end position="238"/>
    </location>
</feature>
<feature type="active site" description="Proton acceptor" evidence="1">
    <location>
        <position position="42"/>
    </location>
</feature>
<feature type="active site" description="Proton donor" evidence="1">
    <location>
        <position position="111"/>
    </location>
</feature>
<feature type="active site" description="Nucleophile" evidence="1">
    <location>
        <position position="145"/>
    </location>
</feature>
<sequence>MKWTISCLQFDISYGKPSENIKKAEFFIEKESKHADVLVLPELWTTGYDLANLDELADEDGRSAQSWLKKTAKKHGVHIVAGSVAVRKNSDVYNTMYIADKEGQIIKEYRKAHLFQLMDEHLYLSAGSEDGYFELDGVKSSGLICYDIRFPEWIRKHTTKGANVLFISAEWPLPRLDHWKSLLIARAIENQCFVAACNCTGSNPDNEFAGHSLIIDPWGRVLAEGGREEGIVRAEIDLQESAEVRESIPVFDDIRKDLY</sequence>
<organism>
    <name type="scientific">Bacillus subtilis (strain 168)</name>
    <dbReference type="NCBI Taxonomy" id="224308"/>
    <lineage>
        <taxon>Bacteria</taxon>
        <taxon>Bacillati</taxon>
        <taxon>Bacillota</taxon>
        <taxon>Bacilli</taxon>
        <taxon>Bacillales</taxon>
        <taxon>Bacillaceae</taxon>
        <taxon>Bacillus</taxon>
    </lineage>
</organism>
<reference key="1">
    <citation type="journal article" date="1997" name="Nature">
        <title>The complete genome sequence of the Gram-positive bacterium Bacillus subtilis.</title>
        <authorList>
            <person name="Kunst F."/>
            <person name="Ogasawara N."/>
            <person name="Moszer I."/>
            <person name="Albertini A.M."/>
            <person name="Alloni G."/>
            <person name="Azevedo V."/>
            <person name="Bertero M.G."/>
            <person name="Bessieres P."/>
            <person name="Bolotin A."/>
            <person name="Borchert S."/>
            <person name="Borriss R."/>
            <person name="Boursier L."/>
            <person name="Brans A."/>
            <person name="Braun M."/>
            <person name="Brignell S.C."/>
            <person name="Bron S."/>
            <person name="Brouillet S."/>
            <person name="Bruschi C.V."/>
            <person name="Caldwell B."/>
            <person name="Capuano V."/>
            <person name="Carter N.M."/>
            <person name="Choi S.-K."/>
            <person name="Codani J.-J."/>
            <person name="Connerton I.F."/>
            <person name="Cummings N.J."/>
            <person name="Daniel R.A."/>
            <person name="Denizot F."/>
            <person name="Devine K.M."/>
            <person name="Duesterhoeft A."/>
            <person name="Ehrlich S.D."/>
            <person name="Emmerson P.T."/>
            <person name="Entian K.-D."/>
            <person name="Errington J."/>
            <person name="Fabret C."/>
            <person name="Ferrari E."/>
            <person name="Foulger D."/>
            <person name="Fritz C."/>
            <person name="Fujita M."/>
            <person name="Fujita Y."/>
            <person name="Fuma S."/>
            <person name="Galizzi A."/>
            <person name="Galleron N."/>
            <person name="Ghim S.-Y."/>
            <person name="Glaser P."/>
            <person name="Goffeau A."/>
            <person name="Golightly E.J."/>
            <person name="Grandi G."/>
            <person name="Guiseppi G."/>
            <person name="Guy B.J."/>
            <person name="Haga K."/>
            <person name="Haiech J."/>
            <person name="Harwood C.R."/>
            <person name="Henaut A."/>
            <person name="Hilbert H."/>
            <person name="Holsappel S."/>
            <person name="Hosono S."/>
            <person name="Hullo M.-F."/>
            <person name="Itaya M."/>
            <person name="Jones L.-M."/>
            <person name="Joris B."/>
            <person name="Karamata D."/>
            <person name="Kasahara Y."/>
            <person name="Klaerr-Blanchard M."/>
            <person name="Klein C."/>
            <person name="Kobayashi Y."/>
            <person name="Koetter P."/>
            <person name="Koningstein G."/>
            <person name="Krogh S."/>
            <person name="Kumano M."/>
            <person name="Kurita K."/>
            <person name="Lapidus A."/>
            <person name="Lardinois S."/>
            <person name="Lauber J."/>
            <person name="Lazarevic V."/>
            <person name="Lee S.-M."/>
            <person name="Levine A."/>
            <person name="Liu H."/>
            <person name="Masuda S."/>
            <person name="Mauel C."/>
            <person name="Medigue C."/>
            <person name="Medina N."/>
            <person name="Mellado R.P."/>
            <person name="Mizuno M."/>
            <person name="Moestl D."/>
            <person name="Nakai S."/>
            <person name="Noback M."/>
            <person name="Noone D."/>
            <person name="O'Reilly M."/>
            <person name="Ogawa K."/>
            <person name="Ogiwara A."/>
            <person name="Oudega B."/>
            <person name="Park S.-H."/>
            <person name="Parro V."/>
            <person name="Pohl T.M."/>
            <person name="Portetelle D."/>
            <person name="Porwollik S."/>
            <person name="Prescott A.M."/>
            <person name="Presecan E."/>
            <person name="Pujic P."/>
            <person name="Purnelle B."/>
            <person name="Rapoport G."/>
            <person name="Rey M."/>
            <person name="Reynolds S."/>
            <person name="Rieger M."/>
            <person name="Rivolta C."/>
            <person name="Rocha E."/>
            <person name="Roche B."/>
            <person name="Rose M."/>
            <person name="Sadaie Y."/>
            <person name="Sato T."/>
            <person name="Scanlan E."/>
            <person name="Schleich S."/>
            <person name="Schroeter R."/>
            <person name="Scoffone F."/>
            <person name="Sekiguchi J."/>
            <person name="Sekowska A."/>
            <person name="Seror S.J."/>
            <person name="Serror P."/>
            <person name="Shin B.-S."/>
            <person name="Soldo B."/>
            <person name="Sorokin A."/>
            <person name="Tacconi E."/>
            <person name="Takagi T."/>
            <person name="Takahashi H."/>
            <person name="Takemaru K."/>
            <person name="Takeuchi M."/>
            <person name="Tamakoshi A."/>
            <person name="Tanaka T."/>
            <person name="Terpstra P."/>
            <person name="Tognoni A."/>
            <person name="Tosato V."/>
            <person name="Uchiyama S."/>
            <person name="Vandenbol M."/>
            <person name="Vannier F."/>
            <person name="Vassarotti A."/>
            <person name="Viari A."/>
            <person name="Wambutt R."/>
            <person name="Wedler E."/>
            <person name="Wedler H."/>
            <person name="Weitzenegger T."/>
            <person name="Winters P."/>
            <person name="Wipat A."/>
            <person name="Yamamoto H."/>
            <person name="Yamane K."/>
            <person name="Yasumoto K."/>
            <person name="Yata K."/>
            <person name="Yoshida K."/>
            <person name="Yoshikawa H.-F."/>
            <person name="Zumstein E."/>
            <person name="Yoshikawa H."/>
            <person name="Danchin A."/>
        </authorList>
    </citation>
    <scope>NUCLEOTIDE SEQUENCE [LARGE SCALE GENOMIC DNA]</scope>
    <source>
        <strain>168</strain>
    </source>
</reference>
<reference key="2">
    <citation type="journal article" date="2002" name="BMC Microbiol.">
        <title>The methionine salvage pathway in Bacillus subtilis.</title>
        <authorList>
            <person name="Sekowska A."/>
            <person name="Danchin A."/>
        </authorList>
    </citation>
    <scope>FUNCTION</scope>
    <scope>DISRUPTION PHENOTYPE</scope>
</reference>
<reference key="3">
    <citation type="journal article" date="2015" name="Phytochemistry">
        <title>Evidence that glutamine transaminase and omega-amidase potentially act in tandem to close the methionine salvage cycle in bacteria and plants.</title>
        <authorList>
            <person name="Ellens K.W."/>
            <person name="Richardson L.G."/>
            <person name="Frelin O."/>
            <person name="Collins J."/>
            <person name="Ribeiro C.L."/>
            <person name="Hsieh Y.F."/>
            <person name="Mullen R.T."/>
            <person name="Hanson A.D."/>
        </authorList>
    </citation>
    <scope>FUNCTION</scope>
    <scope>CATALYTIC ACTIVITY</scope>
    <scope>DISRUPTION PHENOTYPE</scope>
</reference>
<keyword id="KW-0378">Hydrolase</keyword>
<keyword id="KW-1185">Reference proteome</keyword>
<protein>
    <recommendedName>
        <fullName evidence="5">2-oxoglutaramate amidase</fullName>
        <ecNumber evidence="6">3.5.1.111</ecNumber>
    </recommendedName>
</protein>
<dbReference type="EC" id="3.5.1.111" evidence="6"/>
<dbReference type="EMBL" id="AL009126">
    <property type="protein sequence ID" value="CAB13230.1"/>
    <property type="molecule type" value="Genomic_DNA"/>
</dbReference>
<dbReference type="PIR" id="E69863">
    <property type="entry name" value="E69863"/>
</dbReference>
<dbReference type="RefSeq" id="NP_389240.1">
    <property type="nucleotide sequence ID" value="NC_000964.3"/>
</dbReference>
<dbReference type="RefSeq" id="WP_003232495.1">
    <property type="nucleotide sequence ID" value="NZ_OZ025638.1"/>
</dbReference>
<dbReference type="SMR" id="O31664"/>
<dbReference type="FunCoup" id="O31664">
    <property type="interactions" value="677"/>
</dbReference>
<dbReference type="STRING" id="224308.BSU13570"/>
<dbReference type="PaxDb" id="224308-BSU13570"/>
<dbReference type="EnsemblBacteria" id="CAB13230">
    <property type="protein sequence ID" value="CAB13230"/>
    <property type="gene ID" value="BSU_13570"/>
</dbReference>
<dbReference type="GeneID" id="939328"/>
<dbReference type="KEGG" id="bsu:BSU13570"/>
<dbReference type="PATRIC" id="fig|224308.179.peg.1474"/>
<dbReference type="eggNOG" id="COG0388">
    <property type="taxonomic scope" value="Bacteria"/>
</dbReference>
<dbReference type="InParanoid" id="O31664"/>
<dbReference type="OrthoDB" id="9811121at2"/>
<dbReference type="PhylomeDB" id="O31664"/>
<dbReference type="BioCyc" id="BSUB:BSU13570-MONOMER"/>
<dbReference type="BioCyc" id="MetaCyc:BSU13570-MONOMER"/>
<dbReference type="Proteomes" id="UP000001570">
    <property type="component" value="Chromosome"/>
</dbReference>
<dbReference type="GO" id="GO:0106008">
    <property type="term" value="F:2-oxoglutaramate amidase activity"/>
    <property type="evidence" value="ECO:0007669"/>
    <property type="project" value="UniProtKB-EC"/>
</dbReference>
<dbReference type="CDD" id="cd07583">
    <property type="entry name" value="nitrilase_5"/>
    <property type="match status" value="1"/>
</dbReference>
<dbReference type="Gene3D" id="3.60.110.10">
    <property type="entry name" value="Carbon-nitrogen hydrolase"/>
    <property type="match status" value="1"/>
</dbReference>
<dbReference type="InterPro" id="IPR003010">
    <property type="entry name" value="C-N_Hydrolase"/>
</dbReference>
<dbReference type="InterPro" id="IPR036526">
    <property type="entry name" value="C-N_Hydrolase_sf"/>
</dbReference>
<dbReference type="PANTHER" id="PTHR23088:SF27">
    <property type="entry name" value="DEAMINATED GLUTATHIONE AMIDASE"/>
    <property type="match status" value="1"/>
</dbReference>
<dbReference type="PANTHER" id="PTHR23088">
    <property type="entry name" value="NITRILASE-RELATED"/>
    <property type="match status" value="1"/>
</dbReference>
<dbReference type="Pfam" id="PF00795">
    <property type="entry name" value="CN_hydrolase"/>
    <property type="match status" value="1"/>
</dbReference>
<dbReference type="SUPFAM" id="SSF56317">
    <property type="entry name" value="Carbon-nitrogen hydrolase"/>
    <property type="match status" value="1"/>
</dbReference>
<dbReference type="PROSITE" id="PS50263">
    <property type="entry name" value="CN_HYDROLASE"/>
    <property type="match status" value="1"/>
</dbReference>
<gene>
    <name evidence="4" type="primary">mtnU</name>
    <name type="synonym">ykrU</name>
    <name type="ordered locus">BSU13570</name>
</gene>
<name>MTNU_BACSU</name>
<evidence type="ECO:0000255" key="1">
    <source>
        <dbReference type="PROSITE-ProRule" id="PRU00054"/>
    </source>
</evidence>
<evidence type="ECO:0000269" key="2">
    <source>
    </source>
</evidence>
<evidence type="ECO:0000269" key="3">
    <source>
    </source>
</evidence>
<evidence type="ECO:0000303" key="4">
    <source>
    </source>
</evidence>
<evidence type="ECO:0000305" key="5"/>
<evidence type="ECO:0000305" key="6">
    <source>
    </source>
</evidence>